<sequence length="316" mass="35983">MTSENSIHNALYLGFNRSQWAELRESVPLTLNEPELADLRGINEKLSLTEVTDIYLPLSRLLNLIVGAKQKRGLVLNEFLGRKPPKRPYIISIAGSVAVGKSTTARILQALLSQWPEHPRVDLVTTDGFLYPLAELKRRGLLQRKGFPESYDMKMLVEFISNVKAGNEHVKSPLYSHISYDRIKSDYQAIEQPDILIIEGLNVLQSGQDSAVGIQQPFVSDFVDFSIYVDAEEQLLKKWYIDRFLQFRGGAFSDEKSYFHHYSNLADNEAKTIAANIWDSINGPNLKLNIEPTRDRAHLILQKGYDHLMSQVLLRK</sequence>
<reference key="1">
    <citation type="submission" date="2007-08" db="EMBL/GenBank/DDBJ databases">
        <title>Complete sequence of Shewanella sediminis HAW-EB3.</title>
        <authorList>
            <consortium name="US DOE Joint Genome Institute"/>
            <person name="Copeland A."/>
            <person name="Lucas S."/>
            <person name="Lapidus A."/>
            <person name="Barry K."/>
            <person name="Glavina del Rio T."/>
            <person name="Dalin E."/>
            <person name="Tice H."/>
            <person name="Pitluck S."/>
            <person name="Chertkov O."/>
            <person name="Brettin T."/>
            <person name="Bruce D."/>
            <person name="Detter J.C."/>
            <person name="Han C."/>
            <person name="Schmutz J."/>
            <person name="Larimer F."/>
            <person name="Land M."/>
            <person name="Hauser L."/>
            <person name="Kyrpides N."/>
            <person name="Kim E."/>
            <person name="Zhao J.-S."/>
            <person name="Richardson P."/>
        </authorList>
    </citation>
    <scope>NUCLEOTIDE SEQUENCE [LARGE SCALE GENOMIC DNA]</scope>
    <source>
        <strain>HAW-EB3</strain>
    </source>
</reference>
<gene>
    <name evidence="1" type="primary">coaA</name>
    <name type="ordered locus">Ssed_4333</name>
</gene>
<comment type="catalytic activity">
    <reaction evidence="1">
        <text>(R)-pantothenate + ATP = (R)-4'-phosphopantothenate + ADP + H(+)</text>
        <dbReference type="Rhea" id="RHEA:16373"/>
        <dbReference type="ChEBI" id="CHEBI:10986"/>
        <dbReference type="ChEBI" id="CHEBI:15378"/>
        <dbReference type="ChEBI" id="CHEBI:29032"/>
        <dbReference type="ChEBI" id="CHEBI:30616"/>
        <dbReference type="ChEBI" id="CHEBI:456216"/>
        <dbReference type="EC" id="2.7.1.33"/>
    </reaction>
</comment>
<comment type="pathway">
    <text evidence="1">Cofactor biosynthesis; coenzyme A biosynthesis; CoA from (R)-pantothenate: step 1/5.</text>
</comment>
<comment type="subcellular location">
    <subcellularLocation>
        <location evidence="1">Cytoplasm</location>
    </subcellularLocation>
</comment>
<comment type="similarity">
    <text evidence="1">Belongs to the prokaryotic pantothenate kinase family.</text>
</comment>
<feature type="chain" id="PRO_1000078063" description="Pantothenate kinase">
    <location>
        <begin position="1"/>
        <end position="316"/>
    </location>
</feature>
<feature type="binding site" evidence="1">
    <location>
        <begin position="95"/>
        <end position="102"/>
    </location>
    <ligand>
        <name>ATP</name>
        <dbReference type="ChEBI" id="CHEBI:30616"/>
    </ligand>
</feature>
<name>COAA_SHESH</name>
<protein>
    <recommendedName>
        <fullName evidence="1">Pantothenate kinase</fullName>
        <ecNumber evidence="1">2.7.1.33</ecNumber>
    </recommendedName>
    <alternativeName>
        <fullName evidence="1">Pantothenic acid kinase</fullName>
    </alternativeName>
</protein>
<evidence type="ECO:0000255" key="1">
    <source>
        <dbReference type="HAMAP-Rule" id="MF_00215"/>
    </source>
</evidence>
<accession>A8G1G2</accession>
<keyword id="KW-0067">ATP-binding</keyword>
<keyword id="KW-0173">Coenzyme A biosynthesis</keyword>
<keyword id="KW-0963">Cytoplasm</keyword>
<keyword id="KW-0418">Kinase</keyword>
<keyword id="KW-0547">Nucleotide-binding</keyword>
<keyword id="KW-1185">Reference proteome</keyword>
<keyword id="KW-0808">Transferase</keyword>
<dbReference type="EC" id="2.7.1.33" evidence="1"/>
<dbReference type="EMBL" id="CP000821">
    <property type="protein sequence ID" value="ABV38935.1"/>
    <property type="molecule type" value="Genomic_DNA"/>
</dbReference>
<dbReference type="RefSeq" id="WP_012144662.1">
    <property type="nucleotide sequence ID" value="NC_009831.1"/>
</dbReference>
<dbReference type="SMR" id="A8G1G2"/>
<dbReference type="STRING" id="425104.Ssed_4333"/>
<dbReference type="KEGG" id="sse:Ssed_4333"/>
<dbReference type="eggNOG" id="COG1072">
    <property type="taxonomic scope" value="Bacteria"/>
</dbReference>
<dbReference type="HOGENOM" id="CLU_053818_1_1_6"/>
<dbReference type="OrthoDB" id="1550976at2"/>
<dbReference type="UniPathway" id="UPA00241">
    <property type="reaction ID" value="UER00352"/>
</dbReference>
<dbReference type="Proteomes" id="UP000002015">
    <property type="component" value="Chromosome"/>
</dbReference>
<dbReference type="GO" id="GO:0005737">
    <property type="term" value="C:cytoplasm"/>
    <property type="evidence" value="ECO:0007669"/>
    <property type="project" value="UniProtKB-SubCell"/>
</dbReference>
<dbReference type="GO" id="GO:0005524">
    <property type="term" value="F:ATP binding"/>
    <property type="evidence" value="ECO:0007669"/>
    <property type="project" value="UniProtKB-UniRule"/>
</dbReference>
<dbReference type="GO" id="GO:0004594">
    <property type="term" value="F:pantothenate kinase activity"/>
    <property type="evidence" value="ECO:0007669"/>
    <property type="project" value="UniProtKB-UniRule"/>
</dbReference>
<dbReference type="GO" id="GO:0015937">
    <property type="term" value="P:coenzyme A biosynthetic process"/>
    <property type="evidence" value="ECO:0007669"/>
    <property type="project" value="UniProtKB-UniRule"/>
</dbReference>
<dbReference type="CDD" id="cd02025">
    <property type="entry name" value="PanK"/>
    <property type="match status" value="1"/>
</dbReference>
<dbReference type="FunFam" id="3.40.50.300:FF:000242">
    <property type="entry name" value="Pantothenate kinase"/>
    <property type="match status" value="1"/>
</dbReference>
<dbReference type="Gene3D" id="3.40.50.300">
    <property type="entry name" value="P-loop containing nucleotide triphosphate hydrolases"/>
    <property type="match status" value="1"/>
</dbReference>
<dbReference type="HAMAP" id="MF_00215">
    <property type="entry name" value="Pantothen_kinase_1"/>
    <property type="match status" value="1"/>
</dbReference>
<dbReference type="InterPro" id="IPR027417">
    <property type="entry name" value="P-loop_NTPase"/>
</dbReference>
<dbReference type="InterPro" id="IPR004566">
    <property type="entry name" value="PanK"/>
</dbReference>
<dbReference type="InterPro" id="IPR006083">
    <property type="entry name" value="PRK/URK"/>
</dbReference>
<dbReference type="NCBIfam" id="TIGR00554">
    <property type="entry name" value="panK_bact"/>
    <property type="match status" value="1"/>
</dbReference>
<dbReference type="PANTHER" id="PTHR10285">
    <property type="entry name" value="URIDINE KINASE"/>
    <property type="match status" value="1"/>
</dbReference>
<dbReference type="Pfam" id="PF00485">
    <property type="entry name" value="PRK"/>
    <property type="match status" value="1"/>
</dbReference>
<dbReference type="PIRSF" id="PIRSF000545">
    <property type="entry name" value="Pantothenate_kin"/>
    <property type="match status" value="1"/>
</dbReference>
<dbReference type="SUPFAM" id="SSF52540">
    <property type="entry name" value="P-loop containing nucleoside triphosphate hydrolases"/>
    <property type="match status" value="1"/>
</dbReference>
<proteinExistence type="inferred from homology"/>
<organism>
    <name type="scientific">Shewanella sediminis (strain HAW-EB3)</name>
    <dbReference type="NCBI Taxonomy" id="425104"/>
    <lineage>
        <taxon>Bacteria</taxon>
        <taxon>Pseudomonadati</taxon>
        <taxon>Pseudomonadota</taxon>
        <taxon>Gammaproteobacteria</taxon>
        <taxon>Alteromonadales</taxon>
        <taxon>Shewanellaceae</taxon>
        <taxon>Shewanella</taxon>
    </lineage>
</organism>